<comment type="function">
    <text evidence="1">Endonuclease that specifically degrades the RNA of RNA-DNA hybrids.</text>
</comment>
<comment type="catalytic activity">
    <reaction evidence="1">
        <text>Endonucleolytic cleavage to 5'-phosphomonoester.</text>
        <dbReference type="EC" id="3.1.26.4"/>
    </reaction>
</comment>
<comment type="cofactor">
    <cofactor evidence="1">
        <name>Mg(2+)</name>
        <dbReference type="ChEBI" id="CHEBI:18420"/>
    </cofactor>
    <text evidence="1">Binds 1 Mg(2+) ion per subunit. May bind a second metal ion at a regulatory site, or after substrate binding.</text>
</comment>
<comment type="subunit">
    <text evidence="1">Monomer.</text>
</comment>
<comment type="subcellular location">
    <subcellularLocation>
        <location evidence="1">Cytoplasm</location>
    </subcellularLocation>
</comment>
<comment type="similarity">
    <text evidence="1">Belongs to the RNase H family.</text>
</comment>
<proteinExistence type="inferred from homology"/>
<reference key="1">
    <citation type="submission" date="2008-12" db="EMBL/GenBank/DDBJ databases">
        <title>Complete sequence of chromosome of Shewanella baltica OS223.</title>
        <authorList>
            <consortium name="US DOE Joint Genome Institute"/>
            <person name="Lucas S."/>
            <person name="Copeland A."/>
            <person name="Lapidus A."/>
            <person name="Glavina del Rio T."/>
            <person name="Dalin E."/>
            <person name="Tice H."/>
            <person name="Bruce D."/>
            <person name="Goodwin L."/>
            <person name="Pitluck S."/>
            <person name="Chertkov O."/>
            <person name="Meincke L."/>
            <person name="Brettin T."/>
            <person name="Detter J.C."/>
            <person name="Han C."/>
            <person name="Kuske C.R."/>
            <person name="Larimer F."/>
            <person name="Land M."/>
            <person name="Hauser L."/>
            <person name="Kyrpides N."/>
            <person name="Ovchinnikova G."/>
            <person name="Brettar I."/>
            <person name="Rodrigues J."/>
            <person name="Konstantinidis K."/>
            <person name="Tiedje J."/>
        </authorList>
    </citation>
    <scope>NUCLEOTIDE SEQUENCE [LARGE SCALE GENOMIC DNA]</scope>
    <source>
        <strain>OS223</strain>
    </source>
</reference>
<gene>
    <name evidence="1" type="primary">rnhA</name>
    <name type="ordered locus">Sbal223_2324</name>
</gene>
<evidence type="ECO:0000255" key="1">
    <source>
        <dbReference type="HAMAP-Rule" id="MF_00042"/>
    </source>
</evidence>
<evidence type="ECO:0000255" key="2">
    <source>
        <dbReference type="PROSITE-ProRule" id="PRU00408"/>
    </source>
</evidence>
<name>RNH_SHEB2</name>
<protein>
    <recommendedName>
        <fullName evidence="1">Ribonuclease H</fullName>
        <shortName evidence="1">RNase H</shortName>
        <ecNumber evidence="1">3.1.26.4</ecNumber>
    </recommendedName>
</protein>
<sequence>MTELKLIHIFTDGSCLGNPGPGGYGIVMNYKGHTKEMSDGFALTTNNRMELLAPIIALESLKEPCQVVLTSDSQYMRQGIMTWIHGWKKKGWMTSNRTPVKNVDLWKRLDKASQMHTIDWQWVKGHAGHAENERCDVLARTAAESKPTQPDLGYQP</sequence>
<dbReference type="EC" id="3.1.26.4" evidence="1"/>
<dbReference type="EMBL" id="CP001252">
    <property type="protein sequence ID" value="ACK46823.1"/>
    <property type="molecule type" value="Genomic_DNA"/>
</dbReference>
<dbReference type="RefSeq" id="WP_006081489.1">
    <property type="nucleotide sequence ID" value="NC_011663.1"/>
</dbReference>
<dbReference type="SMR" id="B8E599"/>
<dbReference type="GeneID" id="11772215"/>
<dbReference type="KEGG" id="sbp:Sbal223_2324"/>
<dbReference type="HOGENOM" id="CLU_030894_6_0_6"/>
<dbReference type="Proteomes" id="UP000002507">
    <property type="component" value="Chromosome"/>
</dbReference>
<dbReference type="GO" id="GO:0005737">
    <property type="term" value="C:cytoplasm"/>
    <property type="evidence" value="ECO:0007669"/>
    <property type="project" value="UniProtKB-SubCell"/>
</dbReference>
<dbReference type="GO" id="GO:0000287">
    <property type="term" value="F:magnesium ion binding"/>
    <property type="evidence" value="ECO:0007669"/>
    <property type="project" value="UniProtKB-UniRule"/>
</dbReference>
<dbReference type="GO" id="GO:0003676">
    <property type="term" value="F:nucleic acid binding"/>
    <property type="evidence" value="ECO:0007669"/>
    <property type="project" value="InterPro"/>
</dbReference>
<dbReference type="GO" id="GO:0004523">
    <property type="term" value="F:RNA-DNA hybrid ribonuclease activity"/>
    <property type="evidence" value="ECO:0007669"/>
    <property type="project" value="UniProtKB-UniRule"/>
</dbReference>
<dbReference type="GO" id="GO:0043137">
    <property type="term" value="P:DNA replication, removal of RNA primer"/>
    <property type="evidence" value="ECO:0007669"/>
    <property type="project" value="TreeGrafter"/>
</dbReference>
<dbReference type="CDD" id="cd09278">
    <property type="entry name" value="RNase_HI_prokaryote_like"/>
    <property type="match status" value="1"/>
</dbReference>
<dbReference type="FunFam" id="3.30.420.10:FF:000008">
    <property type="entry name" value="Ribonuclease H"/>
    <property type="match status" value="1"/>
</dbReference>
<dbReference type="Gene3D" id="3.30.420.10">
    <property type="entry name" value="Ribonuclease H-like superfamily/Ribonuclease H"/>
    <property type="match status" value="1"/>
</dbReference>
<dbReference type="HAMAP" id="MF_00042">
    <property type="entry name" value="RNase_H"/>
    <property type="match status" value="1"/>
</dbReference>
<dbReference type="InterPro" id="IPR050092">
    <property type="entry name" value="RNase_H"/>
</dbReference>
<dbReference type="InterPro" id="IPR012337">
    <property type="entry name" value="RNaseH-like_sf"/>
</dbReference>
<dbReference type="InterPro" id="IPR002156">
    <property type="entry name" value="RNaseH_domain"/>
</dbReference>
<dbReference type="InterPro" id="IPR036397">
    <property type="entry name" value="RNaseH_sf"/>
</dbReference>
<dbReference type="InterPro" id="IPR022892">
    <property type="entry name" value="RNaseHI"/>
</dbReference>
<dbReference type="NCBIfam" id="NF001236">
    <property type="entry name" value="PRK00203.1"/>
    <property type="match status" value="1"/>
</dbReference>
<dbReference type="PANTHER" id="PTHR10642">
    <property type="entry name" value="RIBONUCLEASE H1"/>
    <property type="match status" value="1"/>
</dbReference>
<dbReference type="PANTHER" id="PTHR10642:SF26">
    <property type="entry name" value="RIBONUCLEASE H1"/>
    <property type="match status" value="1"/>
</dbReference>
<dbReference type="Pfam" id="PF00075">
    <property type="entry name" value="RNase_H"/>
    <property type="match status" value="1"/>
</dbReference>
<dbReference type="SUPFAM" id="SSF53098">
    <property type="entry name" value="Ribonuclease H-like"/>
    <property type="match status" value="1"/>
</dbReference>
<dbReference type="PROSITE" id="PS50879">
    <property type="entry name" value="RNASE_H_1"/>
    <property type="match status" value="1"/>
</dbReference>
<accession>B8E599</accession>
<keyword id="KW-0963">Cytoplasm</keyword>
<keyword id="KW-0255">Endonuclease</keyword>
<keyword id="KW-0378">Hydrolase</keyword>
<keyword id="KW-0460">Magnesium</keyword>
<keyword id="KW-0479">Metal-binding</keyword>
<keyword id="KW-0540">Nuclease</keyword>
<organism>
    <name type="scientific">Shewanella baltica (strain OS223)</name>
    <dbReference type="NCBI Taxonomy" id="407976"/>
    <lineage>
        <taxon>Bacteria</taxon>
        <taxon>Pseudomonadati</taxon>
        <taxon>Pseudomonadota</taxon>
        <taxon>Gammaproteobacteria</taxon>
        <taxon>Alteromonadales</taxon>
        <taxon>Shewanellaceae</taxon>
        <taxon>Shewanella</taxon>
    </lineage>
</organism>
<feature type="chain" id="PRO_1000194436" description="Ribonuclease H">
    <location>
        <begin position="1"/>
        <end position="156"/>
    </location>
</feature>
<feature type="domain" description="RNase H type-1" evidence="2">
    <location>
        <begin position="3"/>
        <end position="144"/>
    </location>
</feature>
<feature type="binding site" evidence="1">
    <location>
        <position position="12"/>
    </location>
    <ligand>
        <name>Mg(2+)</name>
        <dbReference type="ChEBI" id="CHEBI:18420"/>
        <label>1</label>
    </ligand>
</feature>
<feature type="binding site" evidence="1">
    <location>
        <position position="12"/>
    </location>
    <ligand>
        <name>Mg(2+)</name>
        <dbReference type="ChEBI" id="CHEBI:18420"/>
        <label>2</label>
    </ligand>
</feature>
<feature type="binding site" evidence="1">
    <location>
        <position position="50"/>
    </location>
    <ligand>
        <name>Mg(2+)</name>
        <dbReference type="ChEBI" id="CHEBI:18420"/>
        <label>1</label>
    </ligand>
</feature>
<feature type="binding site" evidence="1">
    <location>
        <position position="72"/>
    </location>
    <ligand>
        <name>Mg(2+)</name>
        <dbReference type="ChEBI" id="CHEBI:18420"/>
        <label>1</label>
    </ligand>
</feature>
<feature type="binding site" evidence="1">
    <location>
        <position position="136"/>
    </location>
    <ligand>
        <name>Mg(2+)</name>
        <dbReference type="ChEBI" id="CHEBI:18420"/>
        <label>2</label>
    </ligand>
</feature>